<keyword id="KW-0028">Amino-acid biosynthesis</keyword>
<keyword id="KW-0055">Arginine biosynthesis</keyword>
<keyword id="KW-0067">ATP-binding</keyword>
<keyword id="KW-0963">Cytoplasm</keyword>
<keyword id="KW-0436">Ligase</keyword>
<keyword id="KW-0547">Nucleotide-binding</keyword>
<keyword id="KW-1185">Reference proteome</keyword>
<dbReference type="EC" id="6.3.4.5" evidence="1"/>
<dbReference type="EMBL" id="CP000776">
    <property type="protein sequence ID" value="ABS52138.1"/>
    <property type="molecule type" value="Genomic_DNA"/>
</dbReference>
<dbReference type="RefSeq" id="WP_012108920.1">
    <property type="nucleotide sequence ID" value="NC_009714.1"/>
</dbReference>
<dbReference type="SMR" id="A7I281"/>
<dbReference type="STRING" id="360107.CHAB381_1064"/>
<dbReference type="KEGG" id="cha:CHAB381_1064"/>
<dbReference type="eggNOG" id="COG0137">
    <property type="taxonomic scope" value="Bacteria"/>
</dbReference>
<dbReference type="HOGENOM" id="CLU_032784_4_2_7"/>
<dbReference type="OrthoDB" id="9801641at2"/>
<dbReference type="UniPathway" id="UPA00068">
    <property type="reaction ID" value="UER00113"/>
</dbReference>
<dbReference type="Proteomes" id="UP000002407">
    <property type="component" value="Chromosome"/>
</dbReference>
<dbReference type="GO" id="GO:0005737">
    <property type="term" value="C:cytoplasm"/>
    <property type="evidence" value="ECO:0007669"/>
    <property type="project" value="UniProtKB-SubCell"/>
</dbReference>
<dbReference type="GO" id="GO:0004055">
    <property type="term" value="F:argininosuccinate synthase activity"/>
    <property type="evidence" value="ECO:0007669"/>
    <property type="project" value="UniProtKB-UniRule"/>
</dbReference>
<dbReference type="GO" id="GO:0005524">
    <property type="term" value="F:ATP binding"/>
    <property type="evidence" value="ECO:0007669"/>
    <property type="project" value="UniProtKB-UniRule"/>
</dbReference>
<dbReference type="GO" id="GO:0000053">
    <property type="term" value="P:argininosuccinate metabolic process"/>
    <property type="evidence" value="ECO:0007669"/>
    <property type="project" value="TreeGrafter"/>
</dbReference>
<dbReference type="GO" id="GO:0006526">
    <property type="term" value="P:L-arginine biosynthetic process"/>
    <property type="evidence" value="ECO:0007669"/>
    <property type="project" value="UniProtKB-UniRule"/>
</dbReference>
<dbReference type="GO" id="GO:0000050">
    <property type="term" value="P:urea cycle"/>
    <property type="evidence" value="ECO:0007669"/>
    <property type="project" value="TreeGrafter"/>
</dbReference>
<dbReference type="CDD" id="cd01999">
    <property type="entry name" value="ASS"/>
    <property type="match status" value="1"/>
</dbReference>
<dbReference type="FunFam" id="3.40.50.620:FF:000019">
    <property type="entry name" value="Argininosuccinate synthase"/>
    <property type="match status" value="1"/>
</dbReference>
<dbReference type="FunFam" id="3.90.1260.10:FF:000007">
    <property type="entry name" value="Argininosuccinate synthase"/>
    <property type="match status" value="1"/>
</dbReference>
<dbReference type="Gene3D" id="3.90.1260.10">
    <property type="entry name" value="Argininosuccinate synthetase, chain A, domain 2"/>
    <property type="match status" value="1"/>
</dbReference>
<dbReference type="Gene3D" id="3.40.50.620">
    <property type="entry name" value="HUPs"/>
    <property type="match status" value="1"/>
</dbReference>
<dbReference type="Gene3D" id="1.20.5.470">
    <property type="entry name" value="Single helix bin"/>
    <property type="match status" value="1"/>
</dbReference>
<dbReference type="HAMAP" id="MF_00005">
    <property type="entry name" value="Arg_succ_synth_type1"/>
    <property type="match status" value="1"/>
</dbReference>
<dbReference type="InterPro" id="IPR048268">
    <property type="entry name" value="Arginosuc_syn_C"/>
</dbReference>
<dbReference type="InterPro" id="IPR048267">
    <property type="entry name" value="Arginosuc_syn_N"/>
</dbReference>
<dbReference type="InterPro" id="IPR001518">
    <property type="entry name" value="Arginosuc_synth"/>
</dbReference>
<dbReference type="InterPro" id="IPR018223">
    <property type="entry name" value="Arginosuc_synth_CS"/>
</dbReference>
<dbReference type="InterPro" id="IPR023434">
    <property type="entry name" value="Arginosuc_synth_type_1_subfam"/>
</dbReference>
<dbReference type="InterPro" id="IPR024074">
    <property type="entry name" value="AS_cat/multimer_dom_body"/>
</dbReference>
<dbReference type="InterPro" id="IPR014729">
    <property type="entry name" value="Rossmann-like_a/b/a_fold"/>
</dbReference>
<dbReference type="NCBIfam" id="TIGR00032">
    <property type="entry name" value="argG"/>
    <property type="match status" value="1"/>
</dbReference>
<dbReference type="NCBIfam" id="NF001770">
    <property type="entry name" value="PRK00509.1"/>
    <property type="match status" value="1"/>
</dbReference>
<dbReference type="PANTHER" id="PTHR11587">
    <property type="entry name" value="ARGININOSUCCINATE SYNTHASE"/>
    <property type="match status" value="1"/>
</dbReference>
<dbReference type="PANTHER" id="PTHR11587:SF2">
    <property type="entry name" value="ARGININOSUCCINATE SYNTHASE"/>
    <property type="match status" value="1"/>
</dbReference>
<dbReference type="Pfam" id="PF20979">
    <property type="entry name" value="Arginosuc_syn_C"/>
    <property type="match status" value="1"/>
</dbReference>
<dbReference type="Pfam" id="PF00764">
    <property type="entry name" value="Arginosuc_synth"/>
    <property type="match status" value="1"/>
</dbReference>
<dbReference type="SUPFAM" id="SSF52402">
    <property type="entry name" value="Adenine nucleotide alpha hydrolases-like"/>
    <property type="match status" value="1"/>
</dbReference>
<dbReference type="SUPFAM" id="SSF69864">
    <property type="entry name" value="Argininosuccinate synthetase, C-terminal domain"/>
    <property type="match status" value="1"/>
</dbReference>
<dbReference type="PROSITE" id="PS00564">
    <property type="entry name" value="ARGININOSUCCIN_SYN_1"/>
    <property type="match status" value="1"/>
</dbReference>
<dbReference type="PROSITE" id="PS00565">
    <property type="entry name" value="ARGININOSUCCIN_SYN_2"/>
    <property type="match status" value="1"/>
</dbReference>
<accession>A7I281</accession>
<reference key="1">
    <citation type="submission" date="2007-07" db="EMBL/GenBank/DDBJ databases">
        <title>Complete genome sequence of Campylobacter hominis ATCC BAA-381, a commensal isolated from the human gastrointestinal tract.</title>
        <authorList>
            <person name="Fouts D.E."/>
            <person name="Mongodin E.F."/>
            <person name="Puiu D."/>
            <person name="Sebastian Y."/>
            <person name="Miller W.G."/>
            <person name="Mandrell R.E."/>
            <person name="Nelson K.E."/>
        </authorList>
    </citation>
    <scope>NUCLEOTIDE SEQUENCE [LARGE SCALE GENOMIC DNA]</scope>
    <source>
        <strain>ATCC BAA-381 / DSM 21671 / CCUG 45161 / LMG 19568 / NCTC 13146 / CH001A</strain>
    </source>
</reference>
<sequence length="406" mass="45881">MKKNVKKVVLAYSGGLDTSVILKWLEDNYKCEVVTFTADIGQNEDLKPIKEKALKLGIKKENIFIKDLREEFVRDYVFPMFRANAVYEGEYLLGTSIARPLISKYLVEIAKKTNADAIAHGATGKGNDQVRFELGAYALNPNIKVIAPWREWDLNSREKLLAYAEKNGIDIAKKKGKSPYSMDANLLHISYEGLVLEDPNHAPEADMWRWTTDPKLAPNESEIIEIEYKNGNPIALNGKNLKPHEMLNELNNLGAKHGIGRLDIVENRFVGMKSRGCYETPGGTIMLKAHRAIESITIDKGAAHLKDELMPKYAELIYNGFWFSPERSMLQALIDKSQEYVNGKVKLELYKGNVIVIGRESKSDTLFNVNFSTFEEDSVYNQKDAEGFIKLNALRFIIAGKNGRKI</sequence>
<organism>
    <name type="scientific">Campylobacter hominis (strain ATCC BAA-381 / DSM 21671 / CCUG 45161 / LMG 19568 / NCTC 13146 / CH001A)</name>
    <dbReference type="NCBI Taxonomy" id="360107"/>
    <lineage>
        <taxon>Bacteria</taxon>
        <taxon>Pseudomonadati</taxon>
        <taxon>Campylobacterota</taxon>
        <taxon>Epsilonproteobacteria</taxon>
        <taxon>Campylobacterales</taxon>
        <taxon>Campylobacteraceae</taxon>
        <taxon>Campylobacter</taxon>
    </lineage>
</organism>
<comment type="catalytic activity">
    <reaction evidence="1">
        <text>L-citrulline + L-aspartate + ATP = 2-(N(omega)-L-arginino)succinate + AMP + diphosphate + H(+)</text>
        <dbReference type="Rhea" id="RHEA:10932"/>
        <dbReference type="ChEBI" id="CHEBI:15378"/>
        <dbReference type="ChEBI" id="CHEBI:29991"/>
        <dbReference type="ChEBI" id="CHEBI:30616"/>
        <dbReference type="ChEBI" id="CHEBI:33019"/>
        <dbReference type="ChEBI" id="CHEBI:57472"/>
        <dbReference type="ChEBI" id="CHEBI:57743"/>
        <dbReference type="ChEBI" id="CHEBI:456215"/>
        <dbReference type="EC" id="6.3.4.5"/>
    </reaction>
</comment>
<comment type="pathway">
    <text evidence="1">Amino-acid biosynthesis; L-arginine biosynthesis; L-arginine from L-ornithine and carbamoyl phosphate: step 2/3.</text>
</comment>
<comment type="subunit">
    <text evidence="1">Homotetramer.</text>
</comment>
<comment type="subcellular location">
    <subcellularLocation>
        <location evidence="1">Cytoplasm</location>
    </subcellularLocation>
</comment>
<comment type="similarity">
    <text evidence="1">Belongs to the argininosuccinate synthase family. Type 1 subfamily.</text>
</comment>
<name>ASSY_CAMHC</name>
<evidence type="ECO:0000255" key="1">
    <source>
        <dbReference type="HAMAP-Rule" id="MF_00005"/>
    </source>
</evidence>
<gene>
    <name evidence="1" type="primary">argG</name>
    <name type="ordered locus">CHAB381_1064</name>
</gene>
<proteinExistence type="inferred from homology"/>
<feature type="chain" id="PRO_1000000387" description="Argininosuccinate synthase">
    <location>
        <begin position="1"/>
        <end position="406"/>
    </location>
</feature>
<feature type="binding site" evidence="1">
    <location>
        <begin position="11"/>
        <end position="19"/>
    </location>
    <ligand>
        <name>ATP</name>
        <dbReference type="ChEBI" id="CHEBI:30616"/>
    </ligand>
</feature>
<feature type="binding site" evidence="1">
    <location>
        <position position="38"/>
    </location>
    <ligand>
        <name>ATP</name>
        <dbReference type="ChEBI" id="CHEBI:30616"/>
    </ligand>
</feature>
<feature type="binding site" evidence="1">
    <location>
        <position position="91"/>
    </location>
    <ligand>
        <name>L-citrulline</name>
        <dbReference type="ChEBI" id="CHEBI:57743"/>
    </ligand>
</feature>
<feature type="binding site" evidence="1">
    <location>
        <position position="96"/>
    </location>
    <ligand>
        <name>L-citrulline</name>
        <dbReference type="ChEBI" id="CHEBI:57743"/>
    </ligand>
</feature>
<feature type="binding site" evidence="1">
    <location>
        <position position="121"/>
    </location>
    <ligand>
        <name>ATP</name>
        <dbReference type="ChEBI" id="CHEBI:30616"/>
    </ligand>
</feature>
<feature type="binding site" evidence="1">
    <location>
        <position position="123"/>
    </location>
    <ligand>
        <name>L-aspartate</name>
        <dbReference type="ChEBI" id="CHEBI:29991"/>
    </ligand>
</feature>
<feature type="binding site" evidence="1">
    <location>
        <position position="127"/>
    </location>
    <ligand>
        <name>L-aspartate</name>
        <dbReference type="ChEBI" id="CHEBI:29991"/>
    </ligand>
</feature>
<feature type="binding site" evidence="1">
    <location>
        <position position="127"/>
    </location>
    <ligand>
        <name>L-citrulline</name>
        <dbReference type="ChEBI" id="CHEBI:57743"/>
    </ligand>
</feature>
<feature type="binding site" evidence="1">
    <location>
        <position position="128"/>
    </location>
    <ligand>
        <name>L-aspartate</name>
        <dbReference type="ChEBI" id="CHEBI:29991"/>
    </ligand>
</feature>
<feature type="binding site" evidence="1">
    <location>
        <position position="131"/>
    </location>
    <ligand>
        <name>L-citrulline</name>
        <dbReference type="ChEBI" id="CHEBI:57743"/>
    </ligand>
</feature>
<feature type="binding site" evidence="1">
    <location>
        <position position="181"/>
    </location>
    <ligand>
        <name>L-citrulline</name>
        <dbReference type="ChEBI" id="CHEBI:57743"/>
    </ligand>
</feature>
<feature type="binding site" evidence="1">
    <location>
        <position position="190"/>
    </location>
    <ligand>
        <name>L-citrulline</name>
        <dbReference type="ChEBI" id="CHEBI:57743"/>
    </ligand>
</feature>
<feature type="binding site" evidence="1">
    <location>
        <position position="266"/>
    </location>
    <ligand>
        <name>L-citrulline</name>
        <dbReference type="ChEBI" id="CHEBI:57743"/>
    </ligand>
</feature>
<feature type="binding site" evidence="1">
    <location>
        <position position="278"/>
    </location>
    <ligand>
        <name>L-citrulline</name>
        <dbReference type="ChEBI" id="CHEBI:57743"/>
    </ligand>
</feature>
<protein>
    <recommendedName>
        <fullName evidence="1">Argininosuccinate synthase</fullName>
        <ecNumber evidence="1">6.3.4.5</ecNumber>
    </recommendedName>
    <alternativeName>
        <fullName evidence="1">Citrulline--aspartate ligase</fullName>
    </alternativeName>
</protein>